<evidence type="ECO:0000250" key="1">
    <source>
        <dbReference type="UniProtKB" id="O14230"/>
    </source>
</evidence>
<evidence type="ECO:0000250" key="2">
    <source>
        <dbReference type="UniProtKB" id="P14324"/>
    </source>
</evidence>
<evidence type="ECO:0000250" key="3">
    <source>
        <dbReference type="UniProtKB" id="Q12051"/>
    </source>
</evidence>
<evidence type="ECO:0000269" key="4">
    <source>
    </source>
</evidence>
<evidence type="ECO:0000269" key="5">
    <source>
    </source>
</evidence>
<evidence type="ECO:0000269" key="6">
    <source>
    </source>
</evidence>
<evidence type="ECO:0000269" key="7">
    <source ref="1"/>
</evidence>
<evidence type="ECO:0000269" key="8">
    <source ref="2"/>
</evidence>
<evidence type="ECO:0000269" key="9">
    <source ref="4"/>
</evidence>
<evidence type="ECO:0000303" key="10">
    <source>
    </source>
</evidence>
<evidence type="ECO:0000303" key="11">
    <source>
    </source>
</evidence>
<evidence type="ECO:0000303" key="12">
    <source>
    </source>
</evidence>
<evidence type="ECO:0000303" key="13">
    <source ref="1"/>
</evidence>
<evidence type="ECO:0000305" key="14"/>
<sequence>MSDLKTRFLEVYSVLKSELLNDPAFEFTDDSRQWVERMLDYNVPGGKLNRGLSVIDSYKLLKEGKELSDDEIFLSSALGWCIEWLQAYFLVLDDIMDSSHTRRGQPCWFRLPKVGMIAVNDGILLRNHIPRILKKHFRQKPYYVDLLDLFNEVEFQTASGQMIDLITTLVGEKDLSKYSLPIHRRIVQYKTAYYSFYLPVACALLMSGEDLEKHTNVKDILIEMGTYFQVQDDYLDCFGAPEVIGKIGTDIEDFKCSWLVVKALELSNEEQKKFLHENYGKDDPASVAKVKELYNTLKLQDVFAEYESKSYDKLIKFIEAHPSQAVQAVLKSFLGKIYKRQK</sequence>
<accession>Q4JHN6</accession>
<name>FPS_PANGI</name>
<feature type="chain" id="PRO_0000446951" description="Farnesyl pyrophosphate synthase">
    <location>
        <begin position="1"/>
        <end position="342"/>
    </location>
</feature>
<feature type="binding site" evidence="3">
    <location>
        <position position="47"/>
    </location>
    <ligand>
        <name>isopentenyl diphosphate</name>
        <dbReference type="ChEBI" id="CHEBI:128769"/>
    </ligand>
</feature>
<feature type="binding site" evidence="3">
    <location>
        <position position="50"/>
    </location>
    <ligand>
        <name>isopentenyl diphosphate</name>
        <dbReference type="ChEBI" id="CHEBI:128769"/>
    </ligand>
</feature>
<feature type="binding site" evidence="3">
    <location>
        <position position="86"/>
    </location>
    <ligand>
        <name>isopentenyl diphosphate</name>
        <dbReference type="ChEBI" id="CHEBI:128769"/>
    </ligand>
</feature>
<feature type="binding site" evidence="3">
    <location>
        <position position="93"/>
    </location>
    <ligand>
        <name>Mg(2+)</name>
        <dbReference type="ChEBI" id="CHEBI:18420"/>
        <label>1</label>
    </ligand>
</feature>
<feature type="binding site" evidence="3">
    <location>
        <position position="93"/>
    </location>
    <ligand>
        <name>Mg(2+)</name>
        <dbReference type="ChEBI" id="CHEBI:18420"/>
        <label>2</label>
    </ligand>
</feature>
<feature type="binding site" evidence="3">
    <location>
        <position position="97"/>
    </location>
    <ligand>
        <name>Mg(2+)</name>
        <dbReference type="ChEBI" id="CHEBI:18420"/>
        <label>1</label>
    </ligand>
</feature>
<feature type="binding site" evidence="3">
    <location>
        <position position="97"/>
    </location>
    <ligand>
        <name>Mg(2+)</name>
        <dbReference type="ChEBI" id="CHEBI:18420"/>
        <label>2</label>
    </ligand>
</feature>
<feature type="binding site" evidence="3">
    <location>
        <position position="102"/>
    </location>
    <ligand>
        <name>dimethylallyl diphosphate</name>
        <dbReference type="ChEBI" id="CHEBI:57623"/>
    </ligand>
</feature>
<feature type="binding site" evidence="3">
    <location>
        <position position="103"/>
    </location>
    <ligand>
        <name>isopentenyl diphosphate</name>
        <dbReference type="ChEBI" id="CHEBI:128769"/>
    </ligand>
</feature>
<feature type="binding site" evidence="3">
    <location>
        <position position="190"/>
    </location>
    <ligand>
        <name>dimethylallyl diphosphate</name>
        <dbReference type="ChEBI" id="CHEBI:57623"/>
    </ligand>
</feature>
<feature type="binding site" evidence="3">
    <location>
        <position position="191"/>
    </location>
    <ligand>
        <name>dimethylallyl diphosphate</name>
        <dbReference type="ChEBI" id="CHEBI:57623"/>
    </ligand>
</feature>
<feature type="binding site" evidence="3">
    <location>
        <position position="229"/>
    </location>
    <ligand>
        <name>dimethylallyl diphosphate</name>
        <dbReference type="ChEBI" id="CHEBI:57623"/>
    </ligand>
</feature>
<feature type="binding site" evidence="3">
    <location>
        <position position="246"/>
    </location>
    <ligand>
        <name>dimethylallyl diphosphate</name>
        <dbReference type="ChEBI" id="CHEBI:57623"/>
    </ligand>
</feature>
<feature type="binding site" evidence="3">
    <location>
        <position position="255"/>
    </location>
    <ligand>
        <name>dimethylallyl diphosphate</name>
        <dbReference type="ChEBI" id="CHEBI:57623"/>
    </ligand>
</feature>
<organism>
    <name type="scientific">Panax ginseng</name>
    <name type="common">Korean ginseng</name>
    <dbReference type="NCBI Taxonomy" id="4054"/>
    <lineage>
        <taxon>Eukaryota</taxon>
        <taxon>Viridiplantae</taxon>
        <taxon>Streptophyta</taxon>
        <taxon>Embryophyta</taxon>
        <taxon>Tracheophyta</taxon>
        <taxon>Spermatophyta</taxon>
        <taxon>Magnoliopsida</taxon>
        <taxon>eudicotyledons</taxon>
        <taxon>Gunneridae</taxon>
        <taxon>Pentapetalae</taxon>
        <taxon>asterids</taxon>
        <taxon>campanulids</taxon>
        <taxon>Apiales</taxon>
        <taxon>Araliaceae</taxon>
        <taxon>Panax</taxon>
    </lineage>
</organism>
<keyword id="KW-0125">Carotenoid biosynthesis</keyword>
<keyword id="KW-0963">Cytoplasm</keyword>
<keyword id="KW-0414">Isoprene biosynthesis</keyword>
<keyword id="KW-0460">Magnesium</keyword>
<keyword id="KW-0479">Metal-binding</keyword>
<keyword id="KW-0653">Protein transport</keyword>
<keyword id="KW-0808">Transferase</keyword>
<keyword id="KW-0813">Transport</keyword>
<reference key="1">
    <citation type="journal article" date="2010" name="Biol. Plant.">
        <title>Molecular characterization of ginseng farnesyl diphosphate synthase gene and its up-regulation by methyl jasmonate.</title>
        <authorList>
            <person name="Kim O.T."/>
            <person name="Bang K.H."/>
            <person name="Jung S.J."/>
            <person name="Kim Y.C."/>
            <person name="Hyun D.Y."/>
            <person name="Kim S.H."/>
            <person name="Cha S.W."/>
        </authorList>
    </citation>
    <scope>NUCLEOTIDE SEQUENCE [MRNA]</scope>
    <scope>INDUCTION BY METHYL JASMONATE</scope>
    <scope>TISSUE SPECIFICITY</scope>
    <scope>ACTIVITY REGULATION</scope>
</reference>
<reference key="2">
    <citation type="journal article" date="2009" name="Plant Cell Tissue Organ Cult.">
        <title>Upregulation of ginsenoside and gene expression related to triterpene biosynthesis in ginseng hairy root cultures elicited by methyl jasmonate.</title>
        <authorList>
            <person name="Kim O.T."/>
            <person name="Bang K.H."/>
            <person name="Kim Y.C."/>
            <person name="Hyun D.Y."/>
            <person name="Kim M.Y."/>
            <person name="Cha S.W."/>
        </authorList>
    </citation>
    <scope>INDUCTION BY METHYL JASMONATE</scope>
</reference>
<reference key="3">
    <citation type="journal article" date="2014" name="ACS Synth. Biol.">
        <title>Enhanced triterpene accumulation in Panax ginseng hairy roots overexpressing mevalonate-5-pyrophosphate decarboxylase and farnesyl pyrophosphate synthase.</title>
        <authorList>
            <person name="Kim Y.-K."/>
            <person name="Kim Y.B."/>
            <person name="Uddin M.R."/>
            <person name="Lee S."/>
            <person name="Kim S.-U."/>
            <person name="Park S.U."/>
        </authorList>
    </citation>
    <scope>FUNCTION</scope>
</reference>
<reference key="4">
    <citation type="journal article" date="2014" name="Russ. J. Plant Physiol.">
        <title>Effect of salicylic acid and yeast extract on the accumulation of jasmonic acid and sesquiterpenoids in Panax ginseng adventitious roots.</title>
        <authorList>
            <person name="Rahimi S."/>
            <person name="Devi B.S.R."/>
            <person name="Khorolragchaa A."/>
            <person name="Kim Y.J."/>
            <person name="Kim J.H."/>
            <person name="Jung S.K."/>
            <person name="Yang D.C."/>
        </authorList>
    </citation>
    <scope>INDUCTION BY SALICYLIC ACID AND YEAST EXTRACT</scope>
</reference>
<reference key="5">
    <citation type="journal article" date="2016" name="J. Biotechnol.">
        <title>Fungal elicitors enhance ginsenosides biosynthesis, expression of functional genes as well as signal molecules accumulation in adventitious roots of Panax ginseng C. A. Mey.</title>
        <authorList>
            <person name="Li J."/>
            <person name="Liu S."/>
            <person name="Wang J."/>
            <person name="Li J."/>
            <person name="Liu D."/>
            <person name="Li J."/>
            <person name="Gao W."/>
        </authorList>
    </citation>
    <scope>FUNCTION</scope>
    <scope>INDUCTION BY ASPERGILLUS NIGER</scope>
</reference>
<reference key="6">
    <citation type="journal article" date="2018" name="Biotechnol. Appl. Biochem.">
        <title>Advances in ginsenoside biosynthesis and metabolic regulation.</title>
        <authorList>
            <person name="Lu J."/>
            <person name="Li J."/>
            <person name="Wang S."/>
            <person name="Yao L."/>
            <person name="Liang W."/>
            <person name="Wang J."/>
            <person name="Gao W."/>
        </authorList>
    </citation>
    <scope>REVIEW</scope>
</reference>
<reference key="7">
    <citation type="journal article" date="2018" name="Molecules">
        <title>Progress on the studies of the key enzymes of ginsenoside biosynthesis.</title>
        <authorList>
            <person name="Yang J.-L."/>
            <person name="Hu Z.-F."/>
            <person name="Zhang T.-T."/>
            <person name="Gu A.-D."/>
            <person name="Gong T."/>
            <person name="Zhu P."/>
        </authorList>
    </citation>
    <scope>REVIEW</scope>
    <scope>NOMENCLATURE</scope>
</reference>
<reference key="8">
    <citation type="journal article" date="2018" name="Molecules">
        <title>The effects of environmental factors on ginsenoside biosynthetic enzyme gene expression and saponin abundance.</title>
        <authorList>
            <person name="Zhang T."/>
            <person name="Han M."/>
            <person name="Yang L."/>
            <person name="Han Z."/>
            <person name="Cheng L."/>
            <person name="Sun Z."/>
            <person name="Yang L."/>
        </authorList>
    </citation>
    <scope>DEVELOPMENTAL STAGE</scope>
    <scope>TISSUE SPECIFICITY</scope>
    <scope>INDUCTION BY ABIOTIC FACTORS</scope>
</reference>
<proteinExistence type="evidence at transcript level"/>
<gene>
    <name evidence="11 12 13" type="primary">FPS</name>
</gene>
<comment type="function">
    <text evidence="1 4 5 10">Catalyzes the sequential condensation of isopentenyl pyrophosphate with the allylic pyrophosphates, dimethylallyl pyrophosphate, and then with the resultant geranylpyrophosphate to the ultimate product farnesyl pyrophosphate (By similarity). Component of the triterpene saponins (e.g. ginsenosides or panaxosides) and phytosterols biosynthetic pathways (PubMed:24933610, PubMed:27746309, PubMed:29378087). Promotes the accumulation of ginsenosides (PubMed:24933610).</text>
</comment>
<comment type="catalytic activity">
    <reaction evidence="2">
        <text>isopentenyl diphosphate + dimethylallyl diphosphate = (2E)-geranyl diphosphate + diphosphate</text>
        <dbReference type="Rhea" id="RHEA:22408"/>
        <dbReference type="ChEBI" id="CHEBI:33019"/>
        <dbReference type="ChEBI" id="CHEBI:57623"/>
        <dbReference type="ChEBI" id="CHEBI:58057"/>
        <dbReference type="ChEBI" id="CHEBI:128769"/>
        <dbReference type="EC" id="2.5.1.1"/>
    </reaction>
</comment>
<comment type="catalytic activity">
    <reaction evidence="2">
        <text>isopentenyl diphosphate + (2E)-geranyl diphosphate = (2E,6E)-farnesyl diphosphate + diphosphate</text>
        <dbReference type="Rhea" id="RHEA:19361"/>
        <dbReference type="ChEBI" id="CHEBI:33019"/>
        <dbReference type="ChEBI" id="CHEBI:58057"/>
        <dbReference type="ChEBI" id="CHEBI:128769"/>
        <dbReference type="ChEBI" id="CHEBI:175763"/>
        <dbReference type="EC" id="2.5.1.10"/>
    </reaction>
</comment>
<comment type="cofactor">
    <cofactor evidence="3">
        <name>Mg(2+)</name>
        <dbReference type="ChEBI" id="CHEBI:18420"/>
    </cofactor>
    <text evidence="3">Binds 2 Mg(2+) ions per subunit.</text>
</comment>
<comment type="activity regulation">
    <text evidence="7">Stimulated by methyl jasmonate (MeJA).</text>
</comment>
<comment type="pathway">
    <text evidence="3">Isoprenoid biosynthesis; farnesyl diphosphate biosynthesis; farnesyl diphosphate from geranyl diphosphate and isopentenyl diphosphate: step 1/1.</text>
</comment>
<comment type="pathway">
    <text evidence="3">Isoprenoid biosynthesis; geranyl diphosphate biosynthesis; geranyl diphosphate from dimethylallyl diphosphate and isopentenyl diphosphate: step 1/1.</text>
</comment>
<comment type="subunit">
    <text evidence="2">Homodimer.</text>
</comment>
<comment type="subcellular location">
    <subcellularLocation>
        <location evidence="2">Cytoplasm</location>
    </subcellularLocation>
</comment>
<comment type="tissue specificity">
    <text evidence="6 7">Mostly expressed in roots and seeds, and to a lower extent, in leaves and stems.</text>
</comment>
<comment type="developmental stage">
    <text evidence="6">Rapid decrease in roots and leaves from the leaf opened to the green fruit stage.</text>
</comment>
<comment type="induction">
    <text evidence="5 6 7 8 9">Induced by methyl jasmonate (MeJA) in hairy roots (Ref.1, Ref.2). Induced by A.niger mycelium-derived elicitor, thus improving ginsenosides production in adventitious roots culture (PubMed:27746309). Triggered by salicylic acid and yeast extract (Ref.4). Influenced in roots by relative humidity and rain, and in leaves by rain (PubMed:30577538).</text>
</comment>
<comment type="similarity">
    <text evidence="14">Belongs to the FPP/GGPP synthase family.</text>
</comment>
<protein>
    <recommendedName>
        <fullName evidence="11 13">Farnesyl pyrophosphate synthase</fullName>
        <shortName evidence="13">FPP synthase</shortName>
        <shortName evidence="11 13">PgFPS</shortName>
        <ecNumber evidence="2">2.5.1.10</ecNumber>
    </recommendedName>
    <alternativeName>
        <fullName evidence="14">(2E,6E)-farnesyl diphosphate synthase</fullName>
    </alternativeName>
    <alternativeName>
        <fullName evidence="14">Dimethylallyltranstransferase</fullName>
        <ecNumber evidence="2">2.5.1.1</ecNumber>
    </alternativeName>
    <alternativeName>
        <fullName evidence="13">Farnesyl diphosphate synthase</fullName>
    </alternativeName>
    <alternativeName>
        <fullName evidence="14">Geranyltranstransferase</fullName>
    </alternativeName>
</protein>
<dbReference type="EC" id="2.5.1.10" evidence="2"/>
<dbReference type="EC" id="2.5.1.1" evidence="2"/>
<dbReference type="EMBL" id="DQ087959">
    <property type="protein sequence ID" value="AAY87903.1"/>
    <property type="molecule type" value="mRNA"/>
</dbReference>
<dbReference type="SMR" id="Q4JHN6"/>
<dbReference type="BRENDA" id="2.5.1.10">
    <property type="organism ID" value="7895"/>
</dbReference>
<dbReference type="UniPathway" id="UPA00259">
    <property type="reaction ID" value="UER00368"/>
</dbReference>
<dbReference type="UniPathway" id="UPA00260">
    <property type="reaction ID" value="UER00369"/>
</dbReference>
<dbReference type="GO" id="GO:0005737">
    <property type="term" value="C:cytoplasm"/>
    <property type="evidence" value="ECO:0007669"/>
    <property type="project" value="UniProtKB-SubCell"/>
</dbReference>
<dbReference type="GO" id="GO:0004337">
    <property type="term" value="F:(2E,6E)-farnesyl diphosphate synthase activity"/>
    <property type="evidence" value="ECO:0007669"/>
    <property type="project" value="UniProtKB-EC"/>
</dbReference>
<dbReference type="GO" id="GO:0004161">
    <property type="term" value="F:dimethylallyltranstransferase activity"/>
    <property type="evidence" value="ECO:0007669"/>
    <property type="project" value="UniProtKB-EC"/>
</dbReference>
<dbReference type="GO" id="GO:0046872">
    <property type="term" value="F:metal ion binding"/>
    <property type="evidence" value="ECO:0007669"/>
    <property type="project" value="UniProtKB-KW"/>
</dbReference>
<dbReference type="GO" id="GO:0016117">
    <property type="term" value="P:carotenoid biosynthetic process"/>
    <property type="evidence" value="ECO:0007669"/>
    <property type="project" value="UniProtKB-KW"/>
</dbReference>
<dbReference type="GO" id="GO:0045337">
    <property type="term" value="P:farnesyl diphosphate biosynthetic process"/>
    <property type="evidence" value="ECO:0007669"/>
    <property type="project" value="UniProtKB-UniPathway"/>
</dbReference>
<dbReference type="GO" id="GO:0033384">
    <property type="term" value="P:geranyl diphosphate biosynthetic process"/>
    <property type="evidence" value="ECO:0007669"/>
    <property type="project" value="UniProtKB-UniPathway"/>
</dbReference>
<dbReference type="GO" id="GO:0015031">
    <property type="term" value="P:protein transport"/>
    <property type="evidence" value="ECO:0007669"/>
    <property type="project" value="UniProtKB-KW"/>
</dbReference>
<dbReference type="GO" id="GO:0009753">
    <property type="term" value="P:response to jasmonic acid"/>
    <property type="evidence" value="ECO:0000270"/>
    <property type="project" value="UniProtKB"/>
</dbReference>
<dbReference type="GO" id="GO:0002238">
    <property type="term" value="P:response to molecule of fungal origin"/>
    <property type="evidence" value="ECO:0000270"/>
    <property type="project" value="UniProtKB"/>
</dbReference>
<dbReference type="GO" id="GO:0009751">
    <property type="term" value="P:response to salicylic acid"/>
    <property type="evidence" value="ECO:0000270"/>
    <property type="project" value="UniProtKB"/>
</dbReference>
<dbReference type="GO" id="GO:0001878">
    <property type="term" value="P:response to yeast"/>
    <property type="evidence" value="ECO:0000270"/>
    <property type="project" value="UniProtKB"/>
</dbReference>
<dbReference type="GO" id="GO:0016135">
    <property type="term" value="P:saponin biosynthetic process"/>
    <property type="evidence" value="ECO:0000314"/>
    <property type="project" value="UniProtKB"/>
</dbReference>
<dbReference type="GO" id="GO:0016104">
    <property type="term" value="P:triterpenoid biosynthetic process"/>
    <property type="evidence" value="ECO:0000314"/>
    <property type="project" value="UniProtKB"/>
</dbReference>
<dbReference type="CDD" id="cd00685">
    <property type="entry name" value="Trans_IPPS_HT"/>
    <property type="match status" value="1"/>
</dbReference>
<dbReference type="FunFam" id="1.10.600.10:FF:000008">
    <property type="entry name" value="Farnesyl pyrophosphate synthase"/>
    <property type="match status" value="1"/>
</dbReference>
<dbReference type="Gene3D" id="1.10.600.10">
    <property type="entry name" value="Farnesyl Diphosphate Synthase"/>
    <property type="match status" value="1"/>
</dbReference>
<dbReference type="InterPro" id="IPR039702">
    <property type="entry name" value="FPS1-like"/>
</dbReference>
<dbReference type="InterPro" id="IPR008949">
    <property type="entry name" value="Isoprenoid_synthase_dom_sf"/>
</dbReference>
<dbReference type="InterPro" id="IPR000092">
    <property type="entry name" value="Polyprenyl_synt"/>
</dbReference>
<dbReference type="InterPro" id="IPR033749">
    <property type="entry name" value="Polyprenyl_synt_CS"/>
</dbReference>
<dbReference type="PANTHER" id="PTHR11525:SF0">
    <property type="entry name" value="FARNESYL PYROPHOSPHATE SYNTHASE"/>
    <property type="match status" value="1"/>
</dbReference>
<dbReference type="PANTHER" id="PTHR11525">
    <property type="entry name" value="FARNESYL-PYROPHOSPHATE SYNTHETASE"/>
    <property type="match status" value="1"/>
</dbReference>
<dbReference type="Pfam" id="PF00348">
    <property type="entry name" value="polyprenyl_synt"/>
    <property type="match status" value="1"/>
</dbReference>
<dbReference type="SFLD" id="SFLDS00005">
    <property type="entry name" value="Isoprenoid_Synthase_Type_I"/>
    <property type="match status" value="1"/>
</dbReference>
<dbReference type="SFLD" id="SFLDG01017">
    <property type="entry name" value="Polyprenyl_Transferase_Like"/>
    <property type="match status" value="1"/>
</dbReference>
<dbReference type="SUPFAM" id="SSF48576">
    <property type="entry name" value="Terpenoid synthases"/>
    <property type="match status" value="1"/>
</dbReference>
<dbReference type="PROSITE" id="PS00723">
    <property type="entry name" value="POLYPRENYL_SYNTHASE_1"/>
    <property type="match status" value="1"/>
</dbReference>
<dbReference type="PROSITE" id="PS00444">
    <property type="entry name" value="POLYPRENYL_SYNTHASE_2"/>
    <property type="match status" value="1"/>
</dbReference>